<evidence type="ECO:0000250" key="1"/>
<evidence type="ECO:0000255" key="2"/>
<evidence type="ECO:0000303" key="3">
    <source>
    </source>
</evidence>
<evidence type="ECO:0000305" key="4"/>
<evidence type="ECO:0007829" key="5">
    <source>
        <dbReference type="PDB" id="7LPZ"/>
    </source>
</evidence>
<keyword id="KW-0002">3D-structure</keyword>
<keyword id="KW-0025">Alternative splicing</keyword>
<keyword id="KW-0269">Exonuclease</keyword>
<keyword id="KW-0378">Hydrolase</keyword>
<keyword id="KW-0460">Magnesium</keyword>
<keyword id="KW-0479">Metal-binding</keyword>
<keyword id="KW-0540">Nuclease</keyword>
<keyword id="KW-1267">Proteomics identification</keyword>
<keyword id="KW-1185">Reference proteome</keyword>
<proteinExistence type="evidence at protein level"/>
<accession>O43414</accession>
<accession>B1AK98</accession>
<accession>Q5T2T7</accession>
<accession>Q5T2T9</accession>
<accession>Q5TG35</accession>
<accession>Q9BQA0</accession>
<accession>Q9UEB4</accession>
<gene>
    <name type="primary">ERI3</name>
    <name type="synonym">PINT1</name>
    <name type="synonym">PRNPIP</name>
    <name type="synonym">PRNPIP1</name>
</gene>
<dbReference type="EC" id="3.1.-.-"/>
<dbReference type="EMBL" id="AF007157">
    <property type="protein sequence ID" value="AAC19158.1"/>
    <property type="status" value="ALT_INIT"/>
    <property type="molecule type" value="mRNA"/>
</dbReference>
<dbReference type="EMBL" id="AK290567">
    <property type="protein sequence ID" value="BAF83256.1"/>
    <property type="molecule type" value="mRNA"/>
</dbReference>
<dbReference type="EMBL" id="AL035417">
    <property type="status" value="NOT_ANNOTATED_CDS"/>
    <property type="molecule type" value="Genomic_DNA"/>
</dbReference>
<dbReference type="EMBL" id="AL390776">
    <property type="status" value="NOT_ANNOTATED_CDS"/>
    <property type="molecule type" value="Genomic_DNA"/>
</dbReference>
<dbReference type="EMBL" id="AC004254">
    <property type="protein sequence ID" value="AAC04618.1"/>
    <property type="molecule type" value="Genomic_DNA"/>
</dbReference>
<dbReference type="EMBL" id="BC001072">
    <property type="protein sequence ID" value="AAH01072.1"/>
    <property type="molecule type" value="mRNA"/>
</dbReference>
<dbReference type="EMBL" id="BC004456">
    <property type="protein sequence ID" value="AAH04456.1"/>
    <property type="molecule type" value="mRNA"/>
</dbReference>
<dbReference type="CCDS" id="CCDS30696.1">
    <molecule id="O43414-1"/>
</dbReference>
<dbReference type="RefSeq" id="NP_001288627.1">
    <property type="nucleotide sequence ID" value="NM_001301698.1"/>
</dbReference>
<dbReference type="RefSeq" id="NP_001288628.1">
    <property type="nucleotide sequence ID" value="NM_001301699.1"/>
</dbReference>
<dbReference type="RefSeq" id="NP_001288629.1">
    <property type="nucleotide sequence ID" value="NM_001301700.1"/>
</dbReference>
<dbReference type="RefSeq" id="NP_001288630.1">
    <property type="nucleotide sequence ID" value="NM_001301701.1"/>
</dbReference>
<dbReference type="RefSeq" id="NP_076971.1">
    <molecule id="O43414-1"/>
    <property type="nucleotide sequence ID" value="NM_024066.3"/>
</dbReference>
<dbReference type="PDB" id="2XRI">
    <property type="method" value="X-ray"/>
    <property type="resolution" value="2.15 A"/>
    <property type="chains" value="A=137-337"/>
</dbReference>
<dbReference type="PDB" id="7K05">
    <property type="method" value="X-ray"/>
    <property type="resolution" value="1.85 A"/>
    <property type="chains" value="A/B=137-337"/>
</dbReference>
<dbReference type="PDB" id="7K06">
    <property type="method" value="X-ray"/>
    <property type="resolution" value="1.95 A"/>
    <property type="chains" value="A/B=137-337"/>
</dbReference>
<dbReference type="PDB" id="7K07">
    <property type="method" value="X-ray"/>
    <property type="resolution" value="2.15 A"/>
    <property type="chains" value="A/B=137-337"/>
</dbReference>
<dbReference type="PDB" id="7LPY">
    <property type="method" value="X-ray"/>
    <property type="resolution" value="1.85 A"/>
    <property type="chains" value="A/B=137-337"/>
</dbReference>
<dbReference type="PDB" id="7LPZ">
    <property type="method" value="X-ray"/>
    <property type="resolution" value="1.55 A"/>
    <property type="chains" value="A/B=137-337"/>
</dbReference>
<dbReference type="PDB" id="7LQ0">
    <property type="method" value="X-ray"/>
    <property type="resolution" value="1.60 A"/>
    <property type="chains" value="A/B=137-337"/>
</dbReference>
<dbReference type="PDBsum" id="2XRI"/>
<dbReference type="PDBsum" id="7K05"/>
<dbReference type="PDBsum" id="7K06"/>
<dbReference type="PDBsum" id="7K07"/>
<dbReference type="PDBsum" id="7LPY"/>
<dbReference type="PDBsum" id="7LPZ"/>
<dbReference type="PDBsum" id="7LQ0"/>
<dbReference type="SMR" id="O43414"/>
<dbReference type="BioGRID" id="122498">
    <property type="interactions" value="30"/>
</dbReference>
<dbReference type="FunCoup" id="O43414">
    <property type="interactions" value="1478"/>
</dbReference>
<dbReference type="IntAct" id="O43414">
    <property type="interactions" value="22"/>
</dbReference>
<dbReference type="MINT" id="O43414"/>
<dbReference type="STRING" id="9606.ENSP00000361331"/>
<dbReference type="iPTMnet" id="O43414"/>
<dbReference type="PhosphoSitePlus" id="O43414"/>
<dbReference type="SwissPalm" id="O43414"/>
<dbReference type="BioMuta" id="ERI3"/>
<dbReference type="jPOST" id="O43414"/>
<dbReference type="MassIVE" id="O43414"/>
<dbReference type="PaxDb" id="9606-ENSP00000361331"/>
<dbReference type="PeptideAtlas" id="O43414"/>
<dbReference type="ProteomicsDB" id="48930">
    <molecule id="O43414-1"/>
</dbReference>
<dbReference type="ProteomicsDB" id="48931">
    <molecule id="O43414-2"/>
</dbReference>
<dbReference type="ProteomicsDB" id="48932">
    <molecule id="O43414-3"/>
</dbReference>
<dbReference type="Pumba" id="O43414"/>
<dbReference type="Antibodypedia" id="18452">
    <property type="antibodies" value="75 antibodies from 17 providers"/>
</dbReference>
<dbReference type="DNASU" id="79033"/>
<dbReference type="Ensembl" id="ENST00000372257.7">
    <molecule id="O43414-1"/>
    <property type="protein sequence ID" value="ENSP00000361331.2"/>
    <property type="gene ID" value="ENSG00000117419.16"/>
</dbReference>
<dbReference type="Ensembl" id="ENST00000372259.9">
    <molecule id="O43414-2"/>
    <property type="protein sequence ID" value="ENSP00000361333.5"/>
    <property type="gene ID" value="ENSG00000117419.16"/>
</dbReference>
<dbReference type="GeneID" id="79033"/>
<dbReference type="KEGG" id="hsa:79033"/>
<dbReference type="MANE-Select" id="ENST00000372257.7">
    <property type="protein sequence ID" value="ENSP00000361331.2"/>
    <property type="RefSeq nucleotide sequence ID" value="NM_024066.3"/>
    <property type="RefSeq protein sequence ID" value="NP_076971.1"/>
</dbReference>
<dbReference type="UCSC" id="uc001clt.4">
    <molecule id="O43414-1"/>
    <property type="organism name" value="human"/>
</dbReference>
<dbReference type="AGR" id="HGNC:17276"/>
<dbReference type="CTD" id="79033"/>
<dbReference type="DisGeNET" id="79033"/>
<dbReference type="GeneCards" id="ERI3"/>
<dbReference type="HGNC" id="HGNC:17276">
    <property type="gene designation" value="ERI3"/>
</dbReference>
<dbReference type="HPA" id="ENSG00000117419">
    <property type="expression patterns" value="Low tissue specificity"/>
</dbReference>
<dbReference type="MIM" id="609917">
    <property type="type" value="gene"/>
</dbReference>
<dbReference type="neXtProt" id="NX_O43414"/>
<dbReference type="OpenTargets" id="ENSG00000117419"/>
<dbReference type="PharmGKB" id="PA164719272"/>
<dbReference type="VEuPathDB" id="HostDB:ENSG00000117419"/>
<dbReference type="eggNOG" id="KOG0542">
    <property type="taxonomic scope" value="Eukaryota"/>
</dbReference>
<dbReference type="GeneTree" id="ENSGT00530000063205"/>
<dbReference type="HOGENOM" id="CLU_037266_0_0_1"/>
<dbReference type="InParanoid" id="O43414"/>
<dbReference type="OMA" id="GSHHLGF"/>
<dbReference type="OrthoDB" id="448399at2759"/>
<dbReference type="PAN-GO" id="O43414">
    <property type="GO annotations" value="2 GO annotations based on evolutionary models"/>
</dbReference>
<dbReference type="PhylomeDB" id="O43414"/>
<dbReference type="TreeFam" id="TF313449"/>
<dbReference type="PathwayCommons" id="O43414"/>
<dbReference type="SignaLink" id="O43414"/>
<dbReference type="BioGRID-ORCS" id="79033">
    <property type="hits" value="8 hits in 1153 CRISPR screens"/>
</dbReference>
<dbReference type="ChiTaRS" id="ERI3">
    <property type="organism name" value="human"/>
</dbReference>
<dbReference type="EvolutionaryTrace" id="O43414"/>
<dbReference type="GenomeRNAi" id="79033"/>
<dbReference type="Pharos" id="O43414">
    <property type="development level" value="Tbio"/>
</dbReference>
<dbReference type="PRO" id="PR:O43414"/>
<dbReference type="Proteomes" id="UP000005640">
    <property type="component" value="Chromosome 1"/>
</dbReference>
<dbReference type="RNAct" id="O43414">
    <property type="molecule type" value="protein"/>
</dbReference>
<dbReference type="Bgee" id="ENSG00000117419">
    <property type="expression patterns" value="Expressed in left testis and 149 other cell types or tissues"/>
</dbReference>
<dbReference type="ExpressionAtlas" id="O43414">
    <property type="expression patterns" value="baseline and differential"/>
</dbReference>
<dbReference type="GO" id="GO:0000175">
    <property type="term" value="F:3'-5'-RNA exonuclease activity"/>
    <property type="evidence" value="ECO:0007669"/>
    <property type="project" value="InterPro"/>
</dbReference>
<dbReference type="GO" id="GO:0046872">
    <property type="term" value="F:metal ion binding"/>
    <property type="evidence" value="ECO:0007669"/>
    <property type="project" value="UniProtKB-KW"/>
</dbReference>
<dbReference type="GO" id="GO:0003723">
    <property type="term" value="F:RNA binding"/>
    <property type="evidence" value="ECO:0007005"/>
    <property type="project" value="UniProtKB"/>
</dbReference>
<dbReference type="CDD" id="cd06133">
    <property type="entry name" value="ERI-1_3'hExo_like"/>
    <property type="match status" value="1"/>
</dbReference>
<dbReference type="FunFam" id="3.30.420.10:FF:000029">
    <property type="entry name" value="ERI1 exoribonuclease 3 isoform X1"/>
    <property type="match status" value="1"/>
</dbReference>
<dbReference type="Gene3D" id="3.30.420.10">
    <property type="entry name" value="Ribonuclease H-like superfamily/Ribonuclease H"/>
    <property type="match status" value="1"/>
</dbReference>
<dbReference type="InterPro" id="IPR051274">
    <property type="entry name" value="3-5_Exoribonuclease"/>
</dbReference>
<dbReference type="InterPro" id="IPR047201">
    <property type="entry name" value="ERI-1_3'hExo-like"/>
</dbReference>
<dbReference type="InterPro" id="IPR013520">
    <property type="entry name" value="Exonuclease_RNaseT/DNA_pol3"/>
</dbReference>
<dbReference type="InterPro" id="IPR012337">
    <property type="entry name" value="RNaseH-like_sf"/>
</dbReference>
<dbReference type="InterPro" id="IPR036397">
    <property type="entry name" value="RNaseH_sf"/>
</dbReference>
<dbReference type="PANTHER" id="PTHR23044">
    <property type="entry name" value="3'-5' EXONUCLEASE ERI1-RELATED"/>
    <property type="match status" value="1"/>
</dbReference>
<dbReference type="PANTHER" id="PTHR23044:SF61">
    <property type="entry name" value="3'-5' EXORIBONUCLEASE 1-RELATED"/>
    <property type="match status" value="1"/>
</dbReference>
<dbReference type="Pfam" id="PF00929">
    <property type="entry name" value="RNase_T"/>
    <property type="match status" value="1"/>
</dbReference>
<dbReference type="SMART" id="SM00479">
    <property type="entry name" value="EXOIII"/>
    <property type="match status" value="1"/>
</dbReference>
<dbReference type="SUPFAM" id="SSF53098">
    <property type="entry name" value="Ribonuclease H-like"/>
    <property type="match status" value="1"/>
</dbReference>
<name>ERI3_HUMAN</name>
<protein>
    <recommendedName>
        <fullName>ERI1 exoribonuclease 3</fullName>
        <ecNumber>3.1.-.-</ecNumber>
    </recommendedName>
    <alternativeName>
        <fullName>Prion interactor 1</fullName>
    </alternativeName>
    <alternativeName>
        <fullName>Prion protein-interacting protein</fullName>
    </alternativeName>
</protein>
<reference key="1">
    <citation type="submission" date="1997-06" db="EMBL/GenBank/DDBJ databases">
        <authorList>
            <person name="Yu W."/>
            <person name="Sarginson J."/>
            <person name="Gibbs R.A."/>
        </authorList>
    </citation>
    <scope>NUCLEOTIDE SEQUENCE [LARGE SCALE MRNA] (ISOFORM 1)</scope>
    <source>
        <tissue>Brain</tissue>
    </source>
</reference>
<reference key="2">
    <citation type="journal article" date="2004" name="Nat. Genet.">
        <title>Complete sequencing and characterization of 21,243 full-length human cDNAs.</title>
        <authorList>
            <person name="Ota T."/>
            <person name="Suzuki Y."/>
            <person name="Nishikawa T."/>
            <person name="Otsuki T."/>
            <person name="Sugiyama T."/>
            <person name="Irie R."/>
            <person name="Wakamatsu A."/>
            <person name="Hayashi K."/>
            <person name="Sato H."/>
            <person name="Nagai K."/>
            <person name="Kimura K."/>
            <person name="Makita H."/>
            <person name="Sekine M."/>
            <person name="Obayashi M."/>
            <person name="Nishi T."/>
            <person name="Shibahara T."/>
            <person name="Tanaka T."/>
            <person name="Ishii S."/>
            <person name="Yamamoto J."/>
            <person name="Saito K."/>
            <person name="Kawai Y."/>
            <person name="Isono Y."/>
            <person name="Nakamura Y."/>
            <person name="Nagahari K."/>
            <person name="Murakami K."/>
            <person name="Yasuda T."/>
            <person name="Iwayanagi T."/>
            <person name="Wagatsuma M."/>
            <person name="Shiratori A."/>
            <person name="Sudo H."/>
            <person name="Hosoiri T."/>
            <person name="Kaku Y."/>
            <person name="Kodaira H."/>
            <person name="Kondo H."/>
            <person name="Sugawara M."/>
            <person name="Takahashi M."/>
            <person name="Kanda K."/>
            <person name="Yokoi T."/>
            <person name="Furuya T."/>
            <person name="Kikkawa E."/>
            <person name="Omura Y."/>
            <person name="Abe K."/>
            <person name="Kamihara K."/>
            <person name="Katsuta N."/>
            <person name="Sato K."/>
            <person name="Tanikawa M."/>
            <person name="Yamazaki M."/>
            <person name="Ninomiya K."/>
            <person name="Ishibashi T."/>
            <person name="Yamashita H."/>
            <person name="Murakawa K."/>
            <person name="Fujimori K."/>
            <person name="Tanai H."/>
            <person name="Kimata M."/>
            <person name="Watanabe M."/>
            <person name="Hiraoka S."/>
            <person name="Chiba Y."/>
            <person name="Ishida S."/>
            <person name="Ono Y."/>
            <person name="Takiguchi S."/>
            <person name="Watanabe S."/>
            <person name="Yosida M."/>
            <person name="Hotuta T."/>
            <person name="Kusano J."/>
            <person name="Kanehori K."/>
            <person name="Takahashi-Fujii A."/>
            <person name="Hara H."/>
            <person name="Tanase T.-O."/>
            <person name="Nomura Y."/>
            <person name="Togiya S."/>
            <person name="Komai F."/>
            <person name="Hara R."/>
            <person name="Takeuchi K."/>
            <person name="Arita M."/>
            <person name="Imose N."/>
            <person name="Musashino K."/>
            <person name="Yuuki H."/>
            <person name="Oshima A."/>
            <person name="Sasaki N."/>
            <person name="Aotsuka S."/>
            <person name="Yoshikawa Y."/>
            <person name="Matsunawa H."/>
            <person name="Ichihara T."/>
            <person name="Shiohata N."/>
            <person name="Sano S."/>
            <person name="Moriya S."/>
            <person name="Momiyama H."/>
            <person name="Satoh N."/>
            <person name="Takami S."/>
            <person name="Terashima Y."/>
            <person name="Suzuki O."/>
            <person name="Nakagawa S."/>
            <person name="Senoh A."/>
            <person name="Mizoguchi H."/>
            <person name="Goto Y."/>
            <person name="Shimizu F."/>
            <person name="Wakebe H."/>
            <person name="Hishigaki H."/>
            <person name="Watanabe T."/>
            <person name="Sugiyama A."/>
            <person name="Takemoto M."/>
            <person name="Kawakami B."/>
            <person name="Yamazaki M."/>
            <person name="Watanabe K."/>
            <person name="Kumagai A."/>
            <person name="Itakura S."/>
            <person name="Fukuzumi Y."/>
            <person name="Fujimori Y."/>
            <person name="Komiyama M."/>
            <person name="Tashiro H."/>
            <person name="Tanigami A."/>
            <person name="Fujiwara T."/>
            <person name="Ono T."/>
            <person name="Yamada K."/>
            <person name="Fujii Y."/>
            <person name="Ozaki K."/>
            <person name="Hirao M."/>
            <person name="Ohmori Y."/>
            <person name="Kawabata A."/>
            <person name="Hikiji T."/>
            <person name="Kobatake N."/>
            <person name="Inagaki H."/>
            <person name="Ikema Y."/>
            <person name="Okamoto S."/>
            <person name="Okitani R."/>
            <person name="Kawakami T."/>
            <person name="Noguchi S."/>
            <person name="Itoh T."/>
            <person name="Shigeta K."/>
            <person name="Senba T."/>
            <person name="Matsumura K."/>
            <person name="Nakajima Y."/>
            <person name="Mizuno T."/>
            <person name="Morinaga M."/>
            <person name="Sasaki M."/>
            <person name="Togashi T."/>
            <person name="Oyama M."/>
            <person name="Hata H."/>
            <person name="Watanabe M."/>
            <person name="Komatsu T."/>
            <person name="Mizushima-Sugano J."/>
            <person name="Satoh T."/>
            <person name="Shirai Y."/>
            <person name="Takahashi Y."/>
            <person name="Nakagawa K."/>
            <person name="Okumura K."/>
            <person name="Nagase T."/>
            <person name="Nomura N."/>
            <person name="Kikuchi H."/>
            <person name="Masuho Y."/>
            <person name="Yamashita R."/>
            <person name="Nakai K."/>
            <person name="Yada T."/>
            <person name="Nakamura Y."/>
            <person name="Ohara O."/>
            <person name="Isogai T."/>
            <person name="Sugano S."/>
        </authorList>
    </citation>
    <scope>NUCLEOTIDE SEQUENCE [LARGE SCALE MRNA] (ISOFORM 1)</scope>
    <source>
        <tissue>Lung</tissue>
    </source>
</reference>
<reference key="3">
    <citation type="journal article" date="2006" name="Nature">
        <title>The DNA sequence and biological annotation of human chromosome 1.</title>
        <authorList>
            <person name="Gregory S.G."/>
            <person name="Barlow K.F."/>
            <person name="McLay K.E."/>
            <person name="Kaul R."/>
            <person name="Swarbreck D."/>
            <person name="Dunham A."/>
            <person name="Scott C.E."/>
            <person name="Howe K.L."/>
            <person name="Woodfine K."/>
            <person name="Spencer C.C.A."/>
            <person name="Jones M.C."/>
            <person name="Gillson C."/>
            <person name="Searle S."/>
            <person name="Zhou Y."/>
            <person name="Kokocinski F."/>
            <person name="McDonald L."/>
            <person name="Evans R."/>
            <person name="Phillips K."/>
            <person name="Atkinson A."/>
            <person name="Cooper R."/>
            <person name="Jones C."/>
            <person name="Hall R.E."/>
            <person name="Andrews T.D."/>
            <person name="Lloyd C."/>
            <person name="Ainscough R."/>
            <person name="Almeida J.P."/>
            <person name="Ambrose K.D."/>
            <person name="Anderson F."/>
            <person name="Andrew R.W."/>
            <person name="Ashwell R.I.S."/>
            <person name="Aubin K."/>
            <person name="Babbage A.K."/>
            <person name="Bagguley C.L."/>
            <person name="Bailey J."/>
            <person name="Beasley H."/>
            <person name="Bethel G."/>
            <person name="Bird C.P."/>
            <person name="Bray-Allen S."/>
            <person name="Brown J.Y."/>
            <person name="Brown A.J."/>
            <person name="Buckley D."/>
            <person name="Burton J."/>
            <person name="Bye J."/>
            <person name="Carder C."/>
            <person name="Chapman J.C."/>
            <person name="Clark S.Y."/>
            <person name="Clarke G."/>
            <person name="Clee C."/>
            <person name="Cobley V."/>
            <person name="Collier R.E."/>
            <person name="Corby N."/>
            <person name="Coville G.J."/>
            <person name="Davies J."/>
            <person name="Deadman R."/>
            <person name="Dunn M."/>
            <person name="Earthrowl M."/>
            <person name="Ellington A.G."/>
            <person name="Errington H."/>
            <person name="Frankish A."/>
            <person name="Frankland J."/>
            <person name="French L."/>
            <person name="Garner P."/>
            <person name="Garnett J."/>
            <person name="Gay L."/>
            <person name="Ghori M.R.J."/>
            <person name="Gibson R."/>
            <person name="Gilby L.M."/>
            <person name="Gillett W."/>
            <person name="Glithero R.J."/>
            <person name="Grafham D.V."/>
            <person name="Griffiths C."/>
            <person name="Griffiths-Jones S."/>
            <person name="Grocock R."/>
            <person name="Hammond S."/>
            <person name="Harrison E.S.I."/>
            <person name="Hart E."/>
            <person name="Haugen E."/>
            <person name="Heath P.D."/>
            <person name="Holmes S."/>
            <person name="Holt K."/>
            <person name="Howden P.J."/>
            <person name="Hunt A.R."/>
            <person name="Hunt S.E."/>
            <person name="Hunter G."/>
            <person name="Isherwood J."/>
            <person name="James R."/>
            <person name="Johnson C."/>
            <person name="Johnson D."/>
            <person name="Joy A."/>
            <person name="Kay M."/>
            <person name="Kershaw J.K."/>
            <person name="Kibukawa M."/>
            <person name="Kimberley A.M."/>
            <person name="King A."/>
            <person name="Knights A.J."/>
            <person name="Lad H."/>
            <person name="Laird G."/>
            <person name="Lawlor S."/>
            <person name="Leongamornlert D.A."/>
            <person name="Lloyd D.M."/>
            <person name="Loveland J."/>
            <person name="Lovell J."/>
            <person name="Lush M.J."/>
            <person name="Lyne R."/>
            <person name="Martin S."/>
            <person name="Mashreghi-Mohammadi M."/>
            <person name="Matthews L."/>
            <person name="Matthews N.S.W."/>
            <person name="McLaren S."/>
            <person name="Milne S."/>
            <person name="Mistry S."/>
            <person name="Moore M.J.F."/>
            <person name="Nickerson T."/>
            <person name="O'Dell C.N."/>
            <person name="Oliver K."/>
            <person name="Palmeiri A."/>
            <person name="Palmer S.A."/>
            <person name="Parker A."/>
            <person name="Patel D."/>
            <person name="Pearce A.V."/>
            <person name="Peck A.I."/>
            <person name="Pelan S."/>
            <person name="Phelps K."/>
            <person name="Phillimore B.J."/>
            <person name="Plumb R."/>
            <person name="Rajan J."/>
            <person name="Raymond C."/>
            <person name="Rouse G."/>
            <person name="Saenphimmachak C."/>
            <person name="Sehra H.K."/>
            <person name="Sheridan E."/>
            <person name="Shownkeen R."/>
            <person name="Sims S."/>
            <person name="Skuce C.D."/>
            <person name="Smith M."/>
            <person name="Steward C."/>
            <person name="Subramanian S."/>
            <person name="Sycamore N."/>
            <person name="Tracey A."/>
            <person name="Tromans A."/>
            <person name="Van Helmond Z."/>
            <person name="Wall M."/>
            <person name="Wallis J.M."/>
            <person name="White S."/>
            <person name="Whitehead S.L."/>
            <person name="Wilkinson J.E."/>
            <person name="Willey D.L."/>
            <person name="Williams H."/>
            <person name="Wilming L."/>
            <person name="Wray P.W."/>
            <person name="Wu Z."/>
            <person name="Coulson A."/>
            <person name="Vaudin M."/>
            <person name="Sulston J.E."/>
            <person name="Durbin R.M."/>
            <person name="Hubbard T."/>
            <person name="Wooster R."/>
            <person name="Dunham I."/>
            <person name="Carter N.P."/>
            <person name="McVean G."/>
            <person name="Ross M.T."/>
            <person name="Harrow J."/>
            <person name="Olson M.V."/>
            <person name="Beck S."/>
            <person name="Rogers J."/>
            <person name="Bentley D.R."/>
        </authorList>
    </citation>
    <scope>NUCLEOTIDE SEQUENCE [LARGE SCALE GENOMIC DNA]</scope>
    <scope>ALTERNATIVE SPLICING (ISOFORM 2)</scope>
</reference>
<reference key="4">
    <citation type="journal article" date="2004" name="Genome Res.">
        <title>The status, quality, and expansion of the NIH full-length cDNA project: the Mammalian Gene Collection (MGC).</title>
        <authorList>
            <consortium name="The MGC Project Team"/>
        </authorList>
    </citation>
    <scope>NUCLEOTIDE SEQUENCE [LARGE SCALE MRNA] (ISOFORM 3)</scope>
    <source>
        <tissue>Lung</tissue>
    </source>
</reference>
<reference key="5">
    <citation type="journal article" date="2011" name="BMC Syst. Biol.">
        <title>Initial characterization of the human central proteome.</title>
        <authorList>
            <person name="Burkard T.R."/>
            <person name="Planyavsky M."/>
            <person name="Kaupe I."/>
            <person name="Breitwieser F.P."/>
            <person name="Buerckstuemmer T."/>
            <person name="Bennett K.L."/>
            <person name="Superti-Furga G."/>
            <person name="Colinge J."/>
        </authorList>
    </citation>
    <scope>IDENTIFICATION BY MASS SPECTROMETRY [LARGE SCALE ANALYSIS]</scope>
</reference>
<reference key="6">
    <citation type="journal article" date="2012" name="Proc. Natl. Acad. Sci. U.S.A.">
        <title>N-terminal acetylome analyses and functional insights of the N-terminal acetyltransferase NatB.</title>
        <authorList>
            <person name="Van Damme P."/>
            <person name="Lasa M."/>
            <person name="Polevoda B."/>
            <person name="Gazquez C."/>
            <person name="Elosegui-Artola A."/>
            <person name="Kim D.S."/>
            <person name="De Juan-Pardo E."/>
            <person name="Demeyer K."/>
            <person name="Hole K."/>
            <person name="Larrea E."/>
            <person name="Timmerman E."/>
            <person name="Prieto J."/>
            <person name="Arnesen T."/>
            <person name="Sherman F."/>
            <person name="Gevaert K."/>
            <person name="Aldabe R."/>
        </authorList>
    </citation>
    <scope>IDENTIFICATION BY MASS SPECTROMETRY [LARGE SCALE ANALYSIS]</scope>
</reference>
<organism>
    <name type="scientific">Homo sapiens</name>
    <name type="common">Human</name>
    <dbReference type="NCBI Taxonomy" id="9606"/>
    <lineage>
        <taxon>Eukaryota</taxon>
        <taxon>Metazoa</taxon>
        <taxon>Chordata</taxon>
        <taxon>Craniata</taxon>
        <taxon>Vertebrata</taxon>
        <taxon>Euteleostomi</taxon>
        <taxon>Mammalia</taxon>
        <taxon>Eutheria</taxon>
        <taxon>Euarchontoglires</taxon>
        <taxon>Primates</taxon>
        <taxon>Haplorrhini</taxon>
        <taxon>Catarrhini</taxon>
        <taxon>Hominidae</taxon>
        <taxon>Homo</taxon>
    </lineage>
</organism>
<sequence length="337" mass="37238">MATASPAADGGRGRPWEGGLVSWPPAPPLTLPWTWMGPSWGQHPGHWGFPALTEPSASPAAGLGIFEVRRVLDASGCSMLAPLQTGAARFSSYLLSRARKVLGSHLFSPCGVPEFCSISTRKLAAHGFGASMAAMVSFPPQRYHYFLVLDFEATCDKPQIHPQEIIEFPILKLNGRTMEIESTFHMYVQPVVHPQLTPFCTELTGIIQAMVDGQPSLQQVLERVDEWMAKEGLLDPNVKSIFVTCGDWDLKVMLPGQCQYLGLPVADYFKQWINLKKAYSFAMGCWPKNGLLDMNKGLSLQHIGRPHSGIDDCKNIANIMKTLAYRGFIFKQTSKPF</sequence>
<feature type="chain" id="PRO_0000317626" description="ERI1 exoribonuclease 3">
    <location>
        <begin position="1"/>
        <end position="337"/>
    </location>
</feature>
<feature type="domain" description="Exonuclease">
    <location>
        <begin position="146"/>
        <end position="320"/>
    </location>
</feature>
<feature type="active site" description="Proton acceptor" evidence="2">
    <location>
        <position position="152"/>
    </location>
</feature>
<feature type="active site" description="Proton acceptor" evidence="2">
    <location>
        <position position="307"/>
    </location>
</feature>
<feature type="binding site" evidence="1">
    <location>
        <position position="150"/>
    </location>
    <ligand>
        <name>Mg(2+)</name>
        <dbReference type="ChEBI" id="CHEBI:18420"/>
        <label>1</label>
    </ligand>
</feature>
<feature type="binding site" evidence="1">
    <location>
        <position position="150"/>
    </location>
    <ligand>
        <name>Mg(2+)</name>
        <dbReference type="ChEBI" id="CHEBI:18420"/>
        <label>2</label>
    </ligand>
</feature>
<feature type="binding site" evidence="1">
    <location>
        <position position="152"/>
    </location>
    <ligand>
        <name>AMP</name>
        <dbReference type="ChEBI" id="CHEBI:456215"/>
    </ligand>
</feature>
<feature type="binding site" evidence="1">
    <location>
        <position position="152"/>
    </location>
    <ligand>
        <name>Mg(2+)</name>
        <dbReference type="ChEBI" id="CHEBI:18420"/>
        <label>1</label>
    </ligand>
</feature>
<feature type="binding site" evidence="1">
    <location>
        <position position="249"/>
    </location>
    <ligand>
        <name>Mg(2+)</name>
        <dbReference type="ChEBI" id="CHEBI:18420"/>
        <label>2</label>
    </ligand>
</feature>
<feature type="binding site" evidence="1">
    <location>
        <position position="307"/>
    </location>
    <ligand>
        <name>AMP</name>
        <dbReference type="ChEBI" id="CHEBI:456215"/>
    </ligand>
</feature>
<feature type="binding site" evidence="1">
    <location>
        <position position="312"/>
    </location>
    <ligand>
        <name>Mg(2+)</name>
        <dbReference type="ChEBI" id="CHEBI:18420"/>
        <label>1</label>
    </ligand>
</feature>
<feature type="splice variant" id="VSP_031104" description="In isoform 3." evidence="3">
    <location>
        <begin position="1"/>
        <end position="209"/>
    </location>
</feature>
<feature type="splice variant" id="VSP_031103" description="In isoform 2." evidence="4">
    <original>MATASPAADGGRGRPWEGGLVSWPPAPPLTLPWTWMGPSWGQHPGHWGFPALTEPSASPAAGLGIFEVRRVLDASGCSMLAPLQTGAARFSSYLLSRARKVLGSHLFSPCGVPEFCSISTRKLAAHGFGASMAAMVSFPPQRYHYFLVLDFEATCDKPQIHPQ</original>
    <variation>MFVMLQVPWLQSCANLVQIGAPLPLLGCLGQYFEVLGSMEVLAGQYGM</variation>
    <location>
        <begin position="1"/>
        <end position="163"/>
    </location>
</feature>
<feature type="strand" evidence="5">
    <location>
        <begin position="144"/>
        <end position="149"/>
    </location>
</feature>
<feature type="strand" evidence="5">
    <location>
        <begin position="165"/>
        <end position="174"/>
    </location>
</feature>
<feature type="turn" evidence="5">
    <location>
        <begin position="175"/>
        <end position="177"/>
    </location>
</feature>
<feature type="strand" evidence="5">
    <location>
        <begin position="180"/>
        <end position="187"/>
    </location>
</feature>
<feature type="strand" evidence="5">
    <location>
        <begin position="191"/>
        <end position="193"/>
    </location>
</feature>
<feature type="helix" evidence="5">
    <location>
        <begin position="198"/>
        <end position="204"/>
    </location>
</feature>
<feature type="helix" evidence="5">
    <location>
        <begin position="208"/>
        <end position="211"/>
    </location>
</feature>
<feature type="helix" evidence="5">
    <location>
        <begin position="217"/>
        <end position="231"/>
    </location>
</feature>
<feature type="turn" evidence="5">
    <location>
        <begin position="232"/>
        <end position="234"/>
    </location>
</feature>
<feature type="strand" evidence="5">
    <location>
        <begin position="240"/>
        <end position="247"/>
    </location>
</feature>
<feature type="helix" evidence="5">
    <location>
        <begin position="248"/>
        <end position="251"/>
    </location>
</feature>
<feature type="helix" evidence="5">
    <location>
        <begin position="253"/>
        <end position="261"/>
    </location>
</feature>
<feature type="helix" evidence="5">
    <location>
        <begin position="267"/>
        <end position="269"/>
    </location>
</feature>
<feature type="strand" evidence="5">
    <location>
        <begin position="272"/>
        <end position="274"/>
    </location>
</feature>
<feature type="helix" evidence="5">
    <location>
        <begin position="275"/>
        <end position="283"/>
    </location>
</feature>
<feature type="helix" evidence="5">
    <location>
        <begin position="290"/>
        <end position="297"/>
    </location>
</feature>
<feature type="helix" evidence="5">
    <location>
        <begin position="309"/>
        <end position="325"/>
    </location>
</feature>
<comment type="cofactor">
    <cofactor evidence="1">
        <name>Mg(2+)</name>
        <dbReference type="ChEBI" id="CHEBI:18420"/>
    </cofactor>
    <text evidence="1">Binds 2 magnesium ions per subunit.</text>
</comment>
<comment type="subunit">
    <text evidence="1">Interacts with PRNP.</text>
</comment>
<comment type="alternative products">
    <event type="alternative splicing"/>
    <isoform>
        <id>O43414-1</id>
        <name>1</name>
        <sequence type="displayed"/>
    </isoform>
    <isoform>
        <id>O43414-2</id>
        <name>2</name>
        <sequence type="described" ref="VSP_031103"/>
    </isoform>
    <isoform>
        <id>O43414-3</id>
        <name>3</name>
        <sequence type="described" ref="VSP_031104"/>
    </isoform>
</comment>
<comment type="sequence caution" evidence="4">
    <conflict type="erroneous initiation">
        <sequence resource="EMBL-CDS" id="AAC19158"/>
    </conflict>
</comment>